<accession>B5XIN3</accession>
<organism>
    <name type="scientific">Streptococcus pyogenes serotype M49 (strain NZ131)</name>
    <dbReference type="NCBI Taxonomy" id="471876"/>
    <lineage>
        <taxon>Bacteria</taxon>
        <taxon>Bacillati</taxon>
        <taxon>Bacillota</taxon>
        <taxon>Bacilli</taxon>
        <taxon>Lactobacillales</taxon>
        <taxon>Streptococcaceae</taxon>
        <taxon>Streptococcus</taxon>
    </lineage>
</organism>
<reference key="1">
    <citation type="journal article" date="2008" name="J. Bacteriol.">
        <title>Genome sequence of a nephritogenic and highly transformable M49 strain of Streptococcus pyogenes.</title>
        <authorList>
            <person name="McShan W.M."/>
            <person name="Ferretti J.J."/>
            <person name="Karasawa T."/>
            <person name="Suvorov A.N."/>
            <person name="Lin S."/>
            <person name="Qin B."/>
            <person name="Jia H."/>
            <person name="Kenton S."/>
            <person name="Najar F."/>
            <person name="Wu H."/>
            <person name="Scott J."/>
            <person name="Roe B.A."/>
            <person name="Savic D.J."/>
        </authorList>
    </citation>
    <scope>NUCLEOTIDE SEQUENCE [LARGE SCALE GENOMIC DNA]</scope>
    <source>
        <strain>NZ131</strain>
    </source>
</reference>
<keyword id="KW-0963">Cytoplasm</keyword>
<keyword id="KW-0489">Methyltransferase</keyword>
<keyword id="KW-0949">S-adenosyl-L-methionine</keyword>
<keyword id="KW-0808">Transferase</keyword>
<comment type="function">
    <text evidence="1">Methylates ribosomal protein L11.</text>
</comment>
<comment type="catalytic activity">
    <reaction evidence="1">
        <text>L-lysyl-[protein] + 3 S-adenosyl-L-methionine = N(6),N(6),N(6)-trimethyl-L-lysyl-[protein] + 3 S-adenosyl-L-homocysteine + 3 H(+)</text>
        <dbReference type="Rhea" id="RHEA:54192"/>
        <dbReference type="Rhea" id="RHEA-COMP:9752"/>
        <dbReference type="Rhea" id="RHEA-COMP:13826"/>
        <dbReference type="ChEBI" id="CHEBI:15378"/>
        <dbReference type="ChEBI" id="CHEBI:29969"/>
        <dbReference type="ChEBI" id="CHEBI:57856"/>
        <dbReference type="ChEBI" id="CHEBI:59789"/>
        <dbReference type="ChEBI" id="CHEBI:61961"/>
    </reaction>
</comment>
<comment type="subcellular location">
    <subcellularLocation>
        <location evidence="1">Cytoplasm</location>
    </subcellularLocation>
</comment>
<comment type="similarity">
    <text evidence="1">Belongs to the methyltransferase superfamily. PrmA family.</text>
</comment>
<dbReference type="EC" id="2.1.1.-" evidence="1"/>
<dbReference type="EMBL" id="CP000829">
    <property type="protein sequence ID" value="ACI61895.1"/>
    <property type="molecule type" value="Genomic_DNA"/>
</dbReference>
<dbReference type="SMR" id="B5XIN3"/>
<dbReference type="KEGG" id="soz:Spy49_1638c"/>
<dbReference type="HOGENOM" id="CLU_049382_0_1_9"/>
<dbReference type="Proteomes" id="UP000001039">
    <property type="component" value="Chromosome"/>
</dbReference>
<dbReference type="GO" id="GO:0005737">
    <property type="term" value="C:cytoplasm"/>
    <property type="evidence" value="ECO:0007669"/>
    <property type="project" value="UniProtKB-SubCell"/>
</dbReference>
<dbReference type="GO" id="GO:0016279">
    <property type="term" value="F:protein-lysine N-methyltransferase activity"/>
    <property type="evidence" value="ECO:0007669"/>
    <property type="project" value="RHEA"/>
</dbReference>
<dbReference type="GO" id="GO:0032259">
    <property type="term" value="P:methylation"/>
    <property type="evidence" value="ECO:0007669"/>
    <property type="project" value="UniProtKB-KW"/>
</dbReference>
<dbReference type="CDD" id="cd02440">
    <property type="entry name" value="AdoMet_MTases"/>
    <property type="match status" value="1"/>
</dbReference>
<dbReference type="Gene3D" id="3.40.50.150">
    <property type="entry name" value="Vaccinia Virus protein VP39"/>
    <property type="match status" value="1"/>
</dbReference>
<dbReference type="HAMAP" id="MF_00735">
    <property type="entry name" value="Methyltr_PrmA"/>
    <property type="match status" value="1"/>
</dbReference>
<dbReference type="InterPro" id="IPR050078">
    <property type="entry name" value="Ribosomal_L11_MeTrfase_PrmA"/>
</dbReference>
<dbReference type="InterPro" id="IPR004498">
    <property type="entry name" value="Ribosomal_PrmA_MeTrfase"/>
</dbReference>
<dbReference type="InterPro" id="IPR029063">
    <property type="entry name" value="SAM-dependent_MTases_sf"/>
</dbReference>
<dbReference type="NCBIfam" id="TIGR00406">
    <property type="entry name" value="prmA"/>
    <property type="match status" value="1"/>
</dbReference>
<dbReference type="PANTHER" id="PTHR43648">
    <property type="entry name" value="ELECTRON TRANSFER FLAVOPROTEIN BETA SUBUNIT LYSINE METHYLTRANSFERASE"/>
    <property type="match status" value="1"/>
</dbReference>
<dbReference type="PANTHER" id="PTHR43648:SF1">
    <property type="entry name" value="ELECTRON TRANSFER FLAVOPROTEIN BETA SUBUNIT LYSINE METHYLTRANSFERASE"/>
    <property type="match status" value="1"/>
</dbReference>
<dbReference type="Pfam" id="PF06325">
    <property type="entry name" value="PrmA"/>
    <property type="match status" value="1"/>
</dbReference>
<dbReference type="PIRSF" id="PIRSF000401">
    <property type="entry name" value="RPL11_MTase"/>
    <property type="match status" value="1"/>
</dbReference>
<dbReference type="SUPFAM" id="SSF53335">
    <property type="entry name" value="S-adenosyl-L-methionine-dependent methyltransferases"/>
    <property type="match status" value="1"/>
</dbReference>
<protein>
    <recommendedName>
        <fullName evidence="1">Ribosomal protein L11 methyltransferase</fullName>
        <shortName evidence="1">L11 Mtase</shortName>
        <ecNumber evidence="1">2.1.1.-</ecNumber>
    </recommendedName>
</protein>
<proteinExistence type="inferred from homology"/>
<feature type="chain" id="PRO_1000132834" description="Ribosomal protein L11 methyltransferase">
    <location>
        <begin position="1"/>
        <end position="317"/>
    </location>
</feature>
<feature type="binding site" evidence="1">
    <location>
        <position position="158"/>
    </location>
    <ligand>
        <name>S-adenosyl-L-methionine</name>
        <dbReference type="ChEBI" id="CHEBI:59789"/>
    </ligand>
</feature>
<feature type="binding site" evidence="1">
    <location>
        <position position="179"/>
    </location>
    <ligand>
        <name>S-adenosyl-L-methionine</name>
        <dbReference type="ChEBI" id="CHEBI:59789"/>
    </ligand>
</feature>
<feature type="binding site" evidence="1">
    <location>
        <position position="201"/>
    </location>
    <ligand>
        <name>S-adenosyl-L-methionine</name>
        <dbReference type="ChEBI" id="CHEBI:59789"/>
    </ligand>
</feature>
<feature type="binding site" evidence="1">
    <location>
        <position position="244"/>
    </location>
    <ligand>
        <name>S-adenosyl-L-methionine</name>
        <dbReference type="ChEBI" id="CHEBI:59789"/>
    </ligand>
</feature>
<gene>
    <name evidence="1" type="primary">prmA</name>
    <name type="ordered locus">Spy49_1638c</name>
</gene>
<evidence type="ECO:0000255" key="1">
    <source>
        <dbReference type="HAMAP-Rule" id="MF_00735"/>
    </source>
</evidence>
<name>PRMA_STRPZ</name>
<sequence>METWQEVAVHVHRDAQEAVSHVLIETGSQGVAIADSADYIGQKDRFGELYPDVEQSDMIAITAYYPSSTNLADVIATINEQLAELASFGLQVGQVTVDSQELAEEDWADNWKKYYEPARITHDLTIVPSWTDYDASAGEKVIKLDPGMAFGTGTHPTTKMSLFALEQVLRGGETVIDVGTGSGVLSIASSLLGAKTIYAYDLDDVAVRVAQENIDLNQGTDNIHVAAGDLLKGVSQEADVIVANILADILVLLTDDAYRLVKKEGYLILSGIISEKLDMVLEAAFSAGFFLETHMVQGEWNALVFKKTDDISGVIGG</sequence>